<sequence length="210" mass="23720">MHPFFQELQQGSQKLGLSLSDEALTLLLKYQDALVLWNKAYNLTAIRDPKEMLVKHLLDSLSILKDLPAGRLLDVGTGGGMPGMIIALCQPERSCVLLDSNGKKIRFLKQFIADLKLKNVIAVQTRVENQDTIDELGQFDVITSRAFASLTDFVEAARPYLHEQSIIAAMKGLIPVEEMEELKQEFSCKVIELHVPRLDEQRHLLLLQRI</sequence>
<name>RSMG_ACIB5</name>
<accession>B7I508</accession>
<proteinExistence type="inferred from homology"/>
<dbReference type="EC" id="2.1.1.170" evidence="1"/>
<dbReference type="EMBL" id="CP001182">
    <property type="protein sequence ID" value="ACJ41173.1"/>
    <property type="molecule type" value="Genomic_DNA"/>
</dbReference>
<dbReference type="RefSeq" id="WP_000553193.1">
    <property type="nucleotide sequence ID" value="NC_011586.2"/>
</dbReference>
<dbReference type="SMR" id="B7I508"/>
<dbReference type="GeneID" id="92893779"/>
<dbReference type="KEGG" id="abn:AB57_1794"/>
<dbReference type="HOGENOM" id="CLU_065341_2_0_6"/>
<dbReference type="Proteomes" id="UP000007094">
    <property type="component" value="Chromosome"/>
</dbReference>
<dbReference type="GO" id="GO:0005829">
    <property type="term" value="C:cytosol"/>
    <property type="evidence" value="ECO:0007669"/>
    <property type="project" value="TreeGrafter"/>
</dbReference>
<dbReference type="GO" id="GO:0070043">
    <property type="term" value="F:rRNA (guanine-N7-)-methyltransferase activity"/>
    <property type="evidence" value="ECO:0007669"/>
    <property type="project" value="UniProtKB-UniRule"/>
</dbReference>
<dbReference type="Gene3D" id="3.40.50.150">
    <property type="entry name" value="Vaccinia Virus protein VP39"/>
    <property type="match status" value="1"/>
</dbReference>
<dbReference type="HAMAP" id="MF_00074">
    <property type="entry name" value="16SrRNA_methyltr_G"/>
    <property type="match status" value="1"/>
</dbReference>
<dbReference type="InterPro" id="IPR003682">
    <property type="entry name" value="rRNA_ssu_MeTfrase_G"/>
</dbReference>
<dbReference type="InterPro" id="IPR029063">
    <property type="entry name" value="SAM-dependent_MTases_sf"/>
</dbReference>
<dbReference type="NCBIfam" id="TIGR00138">
    <property type="entry name" value="rsmG_gidB"/>
    <property type="match status" value="1"/>
</dbReference>
<dbReference type="PANTHER" id="PTHR31760">
    <property type="entry name" value="S-ADENOSYL-L-METHIONINE-DEPENDENT METHYLTRANSFERASES SUPERFAMILY PROTEIN"/>
    <property type="match status" value="1"/>
</dbReference>
<dbReference type="PANTHER" id="PTHR31760:SF0">
    <property type="entry name" value="S-ADENOSYL-L-METHIONINE-DEPENDENT METHYLTRANSFERASES SUPERFAMILY PROTEIN"/>
    <property type="match status" value="1"/>
</dbReference>
<dbReference type="Pfam" id="PF02527">
    <property type="entry name" value="GidB"/>
    <property type="match status" value="1"/>
</dbReference>
<dbReference type="PIRSF" id="PIRSF003078">
    <property type="entry name" value="GidB"/>
    <property type="match status" value="1"/>
</dbReference>
<dbReference type="SUPFAM" id="SSF53335">
    <property type="entry name" value="S-adenosyl-L-methionine-dependent methyltransferases"/>
    <property type="match status" value="1"/>
</dbReference>
<feature type="chain" id="PRO_1000117060" description="Ribosomal RNA small subunit methyltransferase G">
    <location>
        <begin position="1"/>
        <end position="210"/>
    </location>
</feature>
<feature type="binding site" evidence="1">
    <location>
        <position position="76"/>
    </location>
    <ligand>
        <name>S-adenosyl-L-methionine</name>
        <dbReference type="ChEBI" id="CHEBI:59789"/>
    </ligand>
</feature>
<feature type="binding site" evidence="1">
    <location>
        <position position="81"/>
    </location>
    <ligand>
        <name>S-adenosyl-L-methionine</name>
        <dbReference type="ChEBI" id="CHEBI:59789"/>
    </ligand>
</feature>
<feature type="binding site" evidence="1">
    <location>
        <begin position="127"/>
        <end position="128"/>
    </location>
    <ligand>
        <name>S-adenosyl-L-methionine</name>
        <dbReference type="ChEBI" id="CHEBI:59789"/>
    </ligand>
</feature>
<feature type="binding site" evidence="1">
    <location>
        <position position="145"/>
    </location>
    <ligand>
        <name>S-adenosyl-L-methionine</name>
        <dbReference type="ChEBI" id="CHEBI:59789"/>
    </ligand>
</feature>
<evidence type="ECO:0000255" key="1">
    <source>
        <dbReference type="HAMAP-Rule" id="MF_00074"/>
    </source>
</evidence>
<comment type="function">
    <text evidence="1">Specifically methylates the N7 position of guanine in position 527 of 16S rRNA.</text>
</comment>
<comment type="catalytic activity">
    <reaction evidence="1">
        <text>guanosine(527) in 16S rRNA + S-adenosyl-L-methionine = N(7)-methylguanosine(527) in 16S rRNA + S-adenosyl-L-homocysteine</text>
        <dbReference type="Rhea" id="RHEA:42732"/>
        <dbReference type="Rhea" id="RHEA-COMP:10209"/>
        <dbReference type="Rhea" id="RHEA-COMP:10210"/>
        <dbReference type="ChEBI" id="CHEBI:57856"/>
        <dbReference type="ChEBI" id="CHEBI:59789"/>
        <dbReference type="ChEBI" id="CHEBI:74269"/>
        <dbReference type="ChEBI" id="CHEBI:74480"/>
        <dbReference type="EC" id="2.1.1.170"/>
    </reaction>
</comment>
<comment type="subcellular location">
    <subcellularLocation>
        <location evidence="1">Cytoplasm</location>
    </subcellularLocation>
</comment>
<comment type="similarity">
    <text evidence="1">Belongs to the methyltransferase superfamily. RNA methyltransferase RsmG family.</text>
</comment>
<gene>
    <name evidence="1" type="primary">rsmG</name>
    <name type="ordered locus">AB57_1794</name>
</gene>
<organism>
    <name type="scientific">Acinetobacter baumannii (strain AB0057)</name>
    <dbReference type="NCBI Taxonomy" id="480119"/>
    <lineage>
        <taxon>Bacteria</taxon>
        <taxon>Pseudomonadati</taxon>
        <taxon>Pseudomonadota</taxon>
        <taxon>Gammaproteobacteria</taxon>
        <taxon>Moraxellales</taxon>
        <taxon>Moraxellaceae</taxon>
        <taxon>Acinetobacter</taxon>
        <taxon>Acinetobacter calcoaceticus/baumannii complex</taxon>
    </lineage>
</organism>
<reference key="1">
    <citation type="journal article" date="2008" name="J. Bacteriol.">
        <title>Comparative genome sequence analysis of multidrug-resistant Acinetobacter baumannii.</title>
        <authorList>
            <person name="Adams M.D."/>
            <person name="Goglin K."/>
            <person name="Molyneaux N."/>
            <person name="Hujer K.M."/>
            <person name="Lavender H."/>
            <person name="Jamison J.J."/>
            <person name="MacDonald I.J."/>
            <person name="Martin K.M."/>
            <person name="Russo T."/>
            <person name="Campagnari A.A."/>
            <person name="Hujer A.M."/>
            <person name="Bonomo R.A."/>
            <person name="Gill S.R."/>
        </authorList>
    </citation>
    <scope>NUCLEOTIDE SEQUENCE [LARGE SCALE GENOMIC DNA]</scope>
    <source>
        <strain>AB0057</strain>
    </source>
</reference>
<protein>
    <recommendedName>
        <fullName evidence="1">Ribosomal RNA small subunit methyltransferase G</fullName>
        <ecNumber evidence="1">2.1.1.170</ecNumber>
    </recommendedName>
    <alternativeName>
        <fullName evidence="1">16S rRNA 7-methylguanosine methyltransferase</fullName>
        <shortName evidence="1">16S rRNA m7G methyltransferase</shortName>
    </alternativeName>
</protein>
<keyword id="KW-0963">Cytoplasm</keyword>
<keyword id="KW-0489">Methyltransferase</keyword>
<keyword id="KW-0698">rRNA processing</keyword>
<keyword id="KW-0949">S-adenosyl-L-methionine</keyword>
<keyword id="KW-0808">Transferase</keyword>